<feature type="chain" id="PRO_0000386806" description="Ribosomal RNA small subunit methyltransferase H">
    <location>
        <begin position="1"/>
        <end position="314"/>
    </location>
</feature>
<feature type="binding site" evidence="1">
    <location>
        <begin position="36"/>
        <end position="38"/>
    </location>
    <ligand>
        <name>S-adenosyl-L-methionine</name>
        <dbReference type="ChEBI" id="CHEBI:59789"/>
    </ligand>
</feature>
<feature type="binding site" evidence="1">
    <location>
        <position position="56"/>
    </location>
    <ligand>
        <name>S-adenosyl-L-methionine</name>
        <dbReference type="ChEBI" id="CHEBI:59789"/>
    </ligand>
</feature>
<feature type="binding site" evidence="1">
    <location>
        <position position="80"/>
    </location>
    <ligand>
        <name>S-adenosyl-L-methionine</name>
        <dbReference type="ChEBI" id="CHEBI:59789"/>
    </ligand>
</feature>
<feature type="binding site" evidence="1">
    <location>
        <position position="102"/>
    </location>
    <ligand>
        <name>S-adenosyl-L-methionine</name>
        <dbReference type="ChEBI" id="CHEBI:59789"/>
    </ligand>
</feature>
<feature type="binding site" evidence="1">
    <location>
        <position position="109"/>
    </location>
    <ligand>
        <name>S-adenosyl-L-methionine</name>
        <dbReference type="ChEBI" id="CHEBI:59789"/>
    </ligand>
</feature>
<dbReference type="EC" id="2.1.1.199" evidence="1"/>
<dbReference type="EMBL" id="CP000822">
    <property type="protein sequence ID" value="ABV14377.1"/>
    <property type="molecule type" value="Genomic_DNA"/>
</dbReference>
<dbReference type="SMR" id="A8ALL4"/>
<dbReference type="STRING" id="290338.CKO_03293"/>
<dbReference type="KEGG" id="cko:CKO_03293"/>
<dbReference type="HOGENOM" id="CLU_038422_2_0_6"/>
<dbReference type="Proteomes" id="UP000008148">
    <property type="component" value="Chromosome"/>
</dbReference>
<dbReference type="GO" id="GO:0005737">
    <property type="term" value="C:cytoplasm"/>
    <property type="evidence" value="ECO:0007669"/>
    <property type="project" value="UniProtKB-SubCell"/>
</dbReference>
<dbReference type="GO" id="GO:0071424">
    <property type="term" value="F:rRNA (cytosine-N4-)-methyltransferase activity"/>
    <property type="evidence" value="ECO:0007669"/>
    <property type="project" value="UniProtKB-UniRule"/>
</dbReference>
<dbReference type="GO" id="GO:0070475">
    <property type="term" value="P:rRNA base methylation"/>
    <property type="evidence" value="ECO:0007669"/>
    <property type="project" value="UniProtKB-UniRule"/>
</dbReference>
<dbReference type="FunFam" id="1.10.150.170:FF:000001">
    <property type="entry name" value="Ribosomal RNA small subunit methyltransferase H"/>
    <property type="match status" value="1"/>
</dbReference>
<dbReference type="Gene3D" id="1.10.150.170">
    <property type="entry name" value="Putative methyltransferase TM0872, insert domain"/>
    <property type="match status" value="1"/>
</dbReference>
<dbReference type="Gene3D" id="3.40.50.150">
    <property type="entry name" value="Vaccinia Virus protein VP39"/>
    <property type="match status" value="1"/>
</dbReference>
<dbReference type="HAMAP" id="MF_01007">
    <property type="entry name" value="16SrRNA_methyltr_H"/>
    <property type="match status" value="1"/>
</dbReference>
<dbReference type="InterPro" id="IPR002903">
    <property type="entry name" value="RsmH"/>
</dbReference>
<dbReference type="InterPro" id="IPR023397">
    <property type="entry name" value="SAM-dep_MeTrfase_MraW_recog"/>
</dbReference>
<dbReference type="InterPro" id="IPR029063">
    <property type="entry name" value="SAM-dependent_MTases_sf"/>
</dbReference>
<dbReference type="NCBIfam" id="TIGR00006">
    <property type="entry name" value="16S rRNA (cytosine(1402)-N(4))-methyltransferase RsmH"/>
    <property type="match status" value="1"/>
</dbReference>
<dbReference type="PANTHER" id="PTHR11265:SF0">
    <property type="entry name" value="12S RRNA N4-METHYLCYTIDINE METHYLTRANSFERASE"/>
    <property type="match status" value="1"/>
</dbReference>
<dbReference type="PANTHER" id="PTHR11265">
    <property type="entry name" value="S-ADENOSYL-METHYLTRANSFERASE MRAW"/>
    <property type="match status" value="1"/>
</dbReference>
<dbReference type="Pfam" id="PF01795">
    <property type="entry name" value="Methyltransf_5"/>
    <property type="match status" value="1"/>
</dbReference>
<dbReference type="PIRSF" id="PIRSF004486">
    <property type="entry name" value="MraW"/>
    <property type="match status" value="1"/>
</dbReference>
<dbReference type="SUPFAM" id="SSF81799">
    <property type="entry name" value="Putative methyltransferase TM0872, insert domain"/>
    <property type="match status" value="1"/>
</dbReference>
<dbReference type="SUPFAM" id="SSF53335">
    <property type="entry name" value="S-adenosyl-L-methionine-dependent methyltransferases"/>
    <property type="match status" value="1"/>
</dbReference>
<keyword id="KW-0963">Cytoplasm</keyword>
<keyword id="KW-0489">Methyltransferase</keyword>
<keyword id="KW-1185">Reference proteome</keyword>
<keyword id="KW-0698">rRNA processing</keyword>
<keyword id="KW-0949">S-adenosyl-L-methionine</keyword>
<keyword id="KW-0808">Transferase</keyword>
<comment type="function">
    <text evidence="1">Specifically methylates the N4 position of cytidine in position 1402 (C1402) of 16S rRNA.</text>
</comment>
<comment type="catalytic activity">
    <reaction evidence="1">
        <text>cytidine(1402) in 16S rRNA + S-adenosyl-L-methionine = N(4)-methylcytidine(1402) in 16S rRNA + S-adenosyl-L-homocysteine + H(+)</text>
        <dbReference type="Rhea" id="RHEA:42928"/>
        <dbReference type="Rhea" id="RHEA-COMP:10286"/>
        <dbReference type="Rhea" id="RHEA-COMP:10287"/>
        <dbReference type="ChEBI" id="CHEBI:15378"/>
        <dbReference type="ChEBI" id="CHEBI:57856"/>
        <dbReference type="ChEBI" id="CHEBI:59789"/>
        <dbReference type="ChEBI" id="CHEBI:74506"/>
        <dbReference type="ChEBI" id="CHEBI:82748"/>
        <dbReference type="EC" id="2.1.1.199"/>
    </reaction>
</comment>
<comment type="subcellular location">
    <subcellularLocation>
        <location evidence="1">Cytoplasm</location>
    </subcellularLocation>
</comment>
<comment type="similarity">
    <text evidence="1">Belongs to the methyltransferase superfamily. RsmH family.</text>
</comment>
<protein>
    <recommendedName>
        <fullName evidence="1">Ribosomal RNA small subunit methyltransferase H</fullName>
        <ecNumber evidence="1">2.1.1.199</ecNumber>
    </recommendedName>
    <alternativeName>
        <fullName evidence="1">16S rRNA m(4)C1402 methyltransferase</fullName>
    </alternativeName>
    <alternativeName>
        <fullName evidence="1">rRNA (cytosine-N(4)-)-methyltransferase RsmH</fullName>
    </alternativeName>
</protein>
<accession>A8ALL4</accession>
<sequence length="314" mass="35022">MMMENFKHTTVLLDEAVNGLNIRPDGIYIDGTFGRGGHSRLILSRLGEEGRLLAIDRDPQAIAEAQAINDPRFSIIHGPFSALADYVSERELIGKIDGILLDLGVSSPQLDDAERGFSFMRDGPLDMRMDPTRGQSAAEWLQTAEEADIAWVLKTFGEERFAKRIARAIVERNREQPMTRTKELAEVVAAATPVKDKFKHPATRTFQAVRIWVNSELEEIEQALKSSLSVLAPGGRLSIISFHSLEDRIVKRFMREQSRGPQVPAGLPMTEEQLKKLGGRELRALGKLMPGEEEVAENPRARSSVLRIAERTNA</sequence>
<organism>
    <name type="scientific">Citrobacter koseri (strain ATCC BAA-895 / CDC 4225-83 / SGSC4696)</name>
    <dbReference type="NCBI Taxonomy" id="290338"/>
    <lineage>
        <taxon>Bacteria</taxon>
        <taxon>Pseudomonadati</taxon>
        <taxon>Pseudomonadota</taxon>
        <taxon>Gammaproteobacteria</taxon>
        <taxon>Enterobacterales</taxon>
        <taxon>Enterobacteriaceae</taxon>
        <taxon>Citrobacter</taxon>
    </lineage>
</organism>
<gene>
    <name evidence="1" type="primary">rsmH</name>
    <name type="synonym">mraW</name>
    <name type="ordered locus">CKO_03293</name>
</gene>
<evidence type="ECO:0000255" key="1">
    <source>
        <dbReference type="HAMAP-Rule" id="MF_01007"/>
    </source>
</evidence>
<reference key="1">
    <citation type="submission" date="2007-08" db="EMBL/GenBank/DDBJ databases">
        <authorList>
            <consortium name="The Citrobacter koseri Genome Sequencing Project"/>
            <person name="McClelland M."/>
            <person name="Sanderson E.K."/>
            <person name="Porwollik S."/>
            <person name="Spieth J."/>
            <person name="Clifton W.S."/>
            <person name="Latreille P."/>
            <person name="Courtney L."/>
            <person name="Wang C."/>
            <person name="Pepin K."/>
            <person name="Bhonagiri V."/>
            <person name="Nash W."/>
            <person name="Johnson M."/>
            <person name="Thiruvilangam P."/>
            <person name="Wilson R."/>
        </authorList>
    </citation>
    <scope>NUCLEOTIDE SEQUENCE [LARGE SCALE GENOMIC DNA]</scope>
    <source>
        <strain>ATCC BAA-895 / CDC 4225-83 / SGSC4696</strain>
    </source>
</reference>
<proteinExistence type="inferred from homology"/>
<name>RSMH_CITK8</name>